<accession>A1KGK3</accession>
<keyword id="KW-0687">Ribonucleoprotein</keyword>
<keyword id="KW-0689">Ribosomal protein</keyword>
<comment type="subunit">
    <text evidence="1">Part of the 50S ribosomal subunit.</text>
</comment>
<comment type="similarity">
    <text evidence="1">Belongs to the universal ribosomal protein uL30 family.</text>
</comment>
<gene>
    <name evidence="1" type="primary">rpmD</name>
    <name type="ordered locus">BCG_0772</name>
</gene>
<proteinExistence type="inferred from homology"/>
<dbReference type="EMBL" id="AM408590">
    <property type="protein sequence ID" value="CAL70758.1"/>
    <property type="molecule type" value="Genomic_DNA"/>
</dbReference>
<dbReference type="RefSeq" id="WP_003403683.1">
    <property type="nucleotide sequence ID" value="NC_008769.1"/>
</dbReference>
<dbReference type="SMR" id="A1KGK3"/>
<dbReference type="GeneID" id="45424687"/>
<dbReference type="KEGG" id="mbb:BCG_0772"/>
<dbReference type="HOGENOM" id="CLU_131047_2_0_11"/>
<dbReference type="Proteomes" id="UP000001472">
    <property type="component" value="Chromosome"/>
</dbReference>
<dbReference type="GO" id="GO:0022625">
    <property type="term" value="C:cytosolic large ribosomal subunit"/>
    <property type="evidence" value="ECO:0007669"/>
    <property type="project" value="TreeGrafter"/>
</dbReference>
<dbReference type="GO" id="GO:0003735">
    <property type="term" value="F:structural constituent of ribosome"/>
    <property type="evidence" value="ECO:0007669"/>
    <property type="project" value="InterPro"/>
</dbReference>
<dbReference type="GO" id="GO:0006412">
    <property type="term" value="P:translation"/>
    <property type="evidence" value="ECO:0007669"/>
    <property type="project" value="UniProtKB-UniRule"/>
</dbReference>
<dbReference type="CDD" id="cd01658">
    <property type="entry name" value="Ribosomal_L30"/>
    <property type="match status" value="1"/>
</dbReference>
<dbReference type="FunFam" id="3.30.1390.20:FF:000001">
    <property type="entry name" value="50S ribosomal protein L30"/>
    <property type="match status" value="1"/>
</dbReference>
<dbReference type="Gene3D" id="3.30.1390.20">
    <property type="entry name" value="Ribosomal protein L30, ferredoxin-like fold domain"/>
    <property type="match status" value="1"/>
</dbReference>
<dbReference type="HAMAP" id="MF_01371_B">
    <property type="entry name" value="Ribosomal_uL30_B"/>
    <property type="match status" value="1"/>
</dbReference>
<dbReference type="InterPro" id="IPR036919">
    <property type="entry name" value="Ribo_uL30_ferredoxin-like_sf"/>
</dbReference>
<dbReference type="InterPro" id="IPR005996">
    <property type="entry name" value="Ribosomal_uL30_bac-type"/>
</dbReference>
<dbReference type="InterPro" id="IPR018038">
    <property type="entry name" value="Ribosomal_uL30_CS"/>
</dbReference>
<dbReference type="InterPro" id="IPR016082">
    <property type="entry name" value="Ribosomal_uL30_ferredoxin-like"/>
</dbReference>
<dbReference type="NCBIfam" id="TIGR01308">
    <property type="entry name" value="rpmD_bact"/>
    <property type="match status" value="1"/>
</dbReference>
<dbReference type="PANTHER" id="PTHR15892:SF2">
    <property type="entry name" value="LARGE RIBOSOMAL SUBUNIT PROTEIN UL30M"/>
    <property type="match status" value="1"/>
</dbReference>
<dbReference type="PANTHER" id="PTHR15892">
    <property type="entry name" value="MITOCHONDRIAL RIBOSOMAL PROTEIN L30"/>
    <property type="match status" value="1"/>
</dbReference>
<dbReference type="Pfam" id="PF00327">
    <property type="entry name" value="Ribosomal_L30"/>
    <property type="match status" value="1"/>
</dbReference>
<dbReference type="PIRSF" id="PIRSF002211">
    <property type="entry name" value="Ribosomal_L30_bac-type"/>
    <property type="match status" value="1"/>
</dbReference>
<dbReference type="SUPFAM" id="SSF55129">
    <property type="entry name" value="Ribosomal protein L30p/L7e"/>
    <property type="match status" value="1"/>
</dbReference>
<dbReference type="PROSITE" id="PS00634">
    <property type="entry name" value="RIBOSOMAL_L30"/>
    <property type="match status" value="1"/>
</dbReference>
<sequence length="65" mass="7347">MSQLKITQVRSTIGARWKQRESLRTLGLRRIRHSVIREDNAATRGLIAVVRHLVEVEPAQTGGKT</sequence>
<name>RL30_MYCBP</name>
<reference key="1">
    <citation type="journal article" date="2007" name="Proc. Natl. Acad. Sci. U.S.A.">
        <title>Genome plasticity of BCG and impact on vaccine efficacy.</title>
        <authorList>
            <person name="Brosch R."/>
            <person name="Gordon S.V."/>
            <person name="Garnier T."/>
            <person name="Eiglmeier K."/>
            <person name="Frigui W."/>
            <person name="Valenti P."/>
            <person name="Dos Santos S."/>
            <person name="Duthoy S."/>
            <person name="Lacroix C."/>
            <person name="Garcia-Pelayo C."/>
            <person name="Inwald J.K."/>
            <person name="Golby P."/>
            <person name="Garcia J.N."/>
            <person name="Hewinson R.G."/>
            <person name="Behr M.A."/>
            <person name="Quail M.A."/>
            <person name="Churcher C."/>
            <person name="Barrell B.G."/>
            <person name="Parkhill J."/>
            <person name="Cole S.T."/>
        </authorList>
    </citation>
    <scope>NUCLEOTIDE SEQUENCE [LARGE SCALE GENOMIC DNA]</scope>
    <source>
        <strain>BCG / Pasteur 1173P2</strain>
    </source>
</reference>
<protein>
    <recommendedName>
        <fullName evidence="1">Large ribosomal subunit protein uL30</fullName>
    </recommendedName>
    <alternativeName>
        <fullName evidence="2">50S ribosomal protein L30</fullName>
    </alternativeName>
</protein>
<feature type="chain" id="PRO_1000056074" description="Large ribosomal subunit protein uL30">
    <location>
        <begin position="1"/>
        <end position="65"/>
    </location>
</feature>
<evidence type="ECO:0000255" key="1">
    <source>
        <dbReference type="HAMAP-Rule" id="MF_01371"/>
    </source>
</evidence>
<evidence type="ECO:0000305" key="2"/>
<organism>
    <name type="scientific">Mycobacterium bovis (strain BCG / Pasteur 1173P2)</name>
    <dbReference type="NCBI Taxonomy" id="410289"/>
    <lineage>
        <taxon>Bacteria</taxon>
        <taxon>Bacillati</taxon>
        <taxon>Actinomycetota</taxon>
        <taxon>Actinomycetes</taxon>
        <taxon>Mycobacteriales</taxon>
        <taxon>Mycobacteriaceae</taxon>
        <taxon>Mycobacterium</taxon>
        <taxon>Mycobacterium tuberculosis complex</taxon>
    </lineage>
</organism>